<name>TPIS_SHESH</name>
<comment type="function">
    <text evidence="1">Involved in the gluconeogenesis. Catalyzes stereospecifically the conversion of dihydroxyacetone phosphate (DHAP) to D-glyceraldehyde-3-phosphate (G3P).</text>
</comment>
<comment type="catalytic activity">
    <reaction evidence="1">
        <text>D-glyceraldehyde 3-phosphate = dihydroxyacetone phosphate</text>
        <dbReference type="Rhea" id="RHEA:18585"/>
        <dbReference type="ChEBI" id="CHEBI:57642"/>
        <dbReference type="ChEBI" id="CHEBI:59776"/>
        <dbReference type="EC" id="5.3.1.1"/>
    </reaction>
</comment>
<comment type="pathway">
    <text evidence="1">Carbohydrate biosynthesis; gluconeogenesis.</text>
</comment>
<comment type="pathway">
    <text evidence="1">Carbohydrate degradation; glycolysis; D-glyceraldehyde 3-phosphate from glycerone phosphate: step 1/1.</text>
</comment>
<comment type="subunit">
    <text evidence="1">Homodimer.</text>
</comment>
<comment type="subcellular location">
    <subcellularLocation>
        <location evidence="1">Cytoplasm</location>
    </subcellularLocation>
</comment>
<comment type="similarity">
    <text evidence="1">Belongs to the triosephosphate isomerase family.</text>
</comment>
<keyword id="KW-0963">Cytoplasm</keyword>
<keyword id="KW-0312">Gluconeogenesis</keyword>
<keyword id="KW-0324">Glycolysis</keyword>
<keyword id="KW-0413">Isomerase</keyword>
<keyword id="KW-1185">Reference proteome</keyword>
<proteinExistence type="inferred from homology"/>
<reference key="1">
    <citation type="submission" date="2007-08" db="EMBL/GenBank/DDBJ databases">
        <title>Complete sequence of Shewanella sediminis HAW-EB3.</title>
        <authorList>
            <consortium name="US DOE Joint Genome Institute"/>
            <person name="Copeland A."/>
            <person name="Lucas S."/>
            <person name="Lapidus A."/>
            <person name="Barry K."/>
            <person name="Glavina del Rio T."/>
            <person name="Dalin E."/>
            <person name="Tice H."/>
            <person name="Pitluck S."/>
            <person name="Chertkov O."/>
            <person name="Brettin T."/>
            <person name="Bruce D."/>
            <person name="Detter J.C."/>
            <person name="Han C."/>
            <person name="Schmutz J."/>
            <person name="Larimer F."/>
            <person name="Land M."/>
            <person name="Hauser L."/>
            <person name="Kyrpides N."/>
            <person name="Kim E."/>
            <person name="Zhao J.-S."/>
            <person name="Richardson P."/>
        </authorList>
    </citation>
    <scope>NUCLEOTIDE SEQUENCE [LARGE SCALE GENOMIC DNA]</scope>
    <source>
        <strain>HAW-EB3</strain>
    </source>
</reference>
<sequence length="260" mass="28120">MALRRPMVAGNWKMNGSAQLALELFNKFATKLQDDSAEVVLCPPSIYLESVRQQLDANKDALNGCLVRMGAQNLSQHDFGAYTGEVSGQMLKDSGCRYVIIGHSERRRMYGETSDIVAEKFAAAQKHGLTPILCVGESGPAREARRTFEVIAEELDVVIEKNGTMAFDNAIIAYEPLWAVGTGKSATPEQAQEVHAFIRKRLSEVSPYIGENIRILYGGSVTPSNAADLFAQPDVDGGLIGGVSLNSTEFLSLCSIAMSA</sequence>
<organism>
    <name type="scientific">Shewanella sediminis (strain HAW-EB3)</name>
    <dbReference type="NCBI Taxonomy" id="425104"/>
    <lineage>
        <taxon>Bacteria</taxon>
        <taxon>Pseudomonadati</taxon>
        <taxon>Pseudomonadota</taxon>
        <taxon>Gammaproteobacteria</taxon>
        <taxon>Alteromonadales</taxon>
        <taxon>Shewanellaceae</taxon>
        <taxon>Shewanella</taxon>
    </lineage>
</organism>
<dbReference type="EC" id="5.3.1.1" evidence="1"/>
<dbReference type="EMBL" id="CP000821">
    <property type="protein sequence ID" value="ABV37997.1"/>
    <property type="molecule type" value="Genomic_DNA"/>
</dbReference>
<dbReference type="RefSeq" id="WP_012143727.1">
    <property type="nucleotide sequence ID" value="NC_009831.1"/>
</dbReference>
<dbReference type="SMR" id="A8FYS4"/>
<dbReference type="STRING" id="425104.Ssed_3393"/>
<dbReference type="KEGG" id="sse:Ssed_3393"/>
<dbReference type="eggNOG" id="COG0149">
    <property type="taxonomic scope" value="Bacteria"/>
</dbReference>
<dbReference type="HOGENOM" id="CLU_024251_2_1_6"/>
<dbReference type="OrthoDB" id="9809429at2"/>
<dbReference type="UniPathway" id="UPA00109">
    <property type="reaction ID" value="UER00189"/>
</dbReference>
<dbReference type="UniPathway" id="UPA00138"/>
<dbReference type="Proteomes" id="UP000002015">
    <property type="component" value="Chromosome"/>
</dbReference>
<dbReference type="GO" id="GO:0005829">
    <property type="term" value="C:cytosol"/>
    <property type="evidence" value="ECO:0007669"/>
    <property type="project" value="TreeGrafter"/>
</dbReference>
<dbReference type="GO" id="GO:0004807">
    <property type="term" value="F:triose-phosphate isomerase activity"/>
    <property type="evidence" value="ECO:0007669"/>
    <property type="project" value="UniProtKB-UniRule"/>
</dbReference>
<dbReference type="GO" id="GO:0006094">
    <property type="term" value="P:gluconeogenesis"/>
    <property type="evidence" value="ECO:0007669"/>
    <property type="project" value="UniProtKB-UniRule"/>
</dbReference>
<dbReference type="GO" id="GO:0046166">
    <property type="term" value="P:glyceraldehyde-3-phosphate biosynthetic process"/>
    <property type="evidence" value="ECO:0007669"/>
    <property type="project" value="TreeGrafter"/>
</dbReference>
<dbReference type="GO" id="GO:0019563">
    <property type="term" value="P:glycerol catabolic process"/>
    <property type="evidence" value="ECO:0007669"/>
    <property type="project" value="TreeGrafter"/>
</dbReference>
<dbReference type="GO" id="GO:0006096">
    <property type="term" value="P:glycolytic process"/>
    <property type="evidence" value="ECO:0007669"/>
    <property type="project" value="UniProtKB-UniRule"/>
</dbReference>
<dbReference type="CDD" id="cd00311">
    <property type="entry name" value="TIM"/>
    <property type="match status" value="1"/>
</dbReference>
<dbReference type="FunFam" id="3.20.20.70:FF:000016">
    <property type="entry name" value="Triosephosphate isomerase"/>
    <property type="match status" value="1"/>
</dbReference>
<dbReference type="Gene3D" id="3.20.20.70">
    <property type="entry name" value="Aldolase class I"/>
    <property type="match status" value="1"/>
</dbReference>
<dbReference type="HAMAP" id="MF_00147_B">
    <property type="entry name" value="TIM_B"/>
    <property type="match status" value="1"/>
</dbReference>
<dbReference type="InterPro" id="IPR013785">
    <property type="entry name" value="Aldolase_TIM"/>
</dbReference>
<dbReference type="InterPro" id="IPR035990">
    <property type="entry name" value="TIM_sf"/>
</dbReference>
<dbReference type="InterPro" id="IPR022896">
    <property type="entry name" value="TrioseP_Isoase_bac/euk"/>
</dbReference>
<dbReference type="InterPro" id="IPR000652">
    <property type="entry name" value="Triosephosphate_isomerase"/>
</dbReference>
<dbReference type="InterPro" id="IPR020861">
    <property type="entry name" value="Triosephosphate_isomerase_AS"/>
</dbReference>
<dbReference type="NCBIfam" id="TIGR00419">
    <property type="entry name" value="tim"/>
    <property type="match status" value="1"/>
</dbReference>
<dbReference type="PANTHER" id="PTHR21139">
    <property type="entry name" value="TRIOSEPHOSPHATE ISOMERASE"/>
    <property type="match status" value="1"/>
</dbReference>
<dbReference type="PANTHER" id="PTHR21139:SF42">
    <property type="entry name" value="TRIOSEPHOSPHATE ISOMERASE"/>
    <property type="match status" value="1"/>
</dbReference>
<dbReference type="Pfam" id="PF00121">
    <property type="entry name" value="TIM"/>
    <property type="match status" value="1"/>
</dbReference>
<dbReference type="SUPFAM" id="SSF51351">
    <property type="entry name" value="Triosephosphate isomerase (TIM)"/>
    <property type="match status" value="1"/>
</dbReference>
<dbReference type="PROSITE" id="PS00171">
    <property type="entry name" value="TIM_1"/>
    <property type="match status" value="1"/>
</dbReference>
<dbReference type="PROSITE" id="PS51440">
    <property type="entry name" value="TIM_2"/>
    <property type="match status" value="1"/>
</dbReference>
<feature type="chain" id="PRO_1000076662" description="Triosephosphate isomerase">
    <location>
        <begin position="1"/>
        <end position="260"/>
    </location>
</feature>
<feature type="active site" description="Electrophile" evidence="1">
    <location>
        <position position="103"/>
    </location>
</feature>
<feature type="active site" description="Proton acceptor" evidence="1">
    <location>
        <position position="175"/>
    </location>
</feature>
<feature type="binding site" evidence="1">
    <location>
        <begin position="11"/>
        <end position="13"/>
    </location>
    <ligand>
        <name>substrate</name>
    </ligand>
</feature>
<feature type="binding site" evidence="1">
    <location>
        <position position="181"/>
    </location>
    <ligand>
        <name>substrate</name>
    </ligand>
</feature>
<feature type="binding site" evidence="1">
    <location>
        <position position="220"/>
    </location>
    <ligand>
        <name>substrate</name>
    </ligand>
</feature>
<feature type="binding site" evidence="1">
    <location>
        <begin position="241"/>
        <end position="242"/>
    </location>
    <ligand>
        <name>substrate</name>
    </ligand>
</feature>
<evidence type="ECO:0000255" key="1">
    <source>
        <dbReference type="HAMAP-Rule" id="MF_00147"/>
    </source>
</evidence>
<gene>
    <name evidence="1" type="primary">tpiA</name>
    <name type="ordered locus">Ssed_3393</name>
</gene>
<accession>A8FYS4</accession>
<protein>
    <recommendedName>
        <fullName evidence="1">Triosephosphate isomerase</fullName>
        <shortName evidence="1">TIM</shortName>
        <shortName evidence="1">TPI</shortName>
        <ecNumber evidence="1">5.3.1.1</ecNumber>
    </recommendedName>
    <alternativeName>
        <fullName evidence="1">Triose-phosphate isomerase</fullName>
    </alternativeName>
</protein>